<comment type="function">
    <text evidence="1">Component of the cytochrome c oxidase, the last enzyme in the mitochondrial electron transport chain which drives oxidative phosphorylation. The respiratory chain contains 3 multisubunit complexes succinate dehydrogenase (complex II, CII), ubiquinol-cytochrome c oxidoreductase (cytochrome b-c1 complex, complex III, CIII) and cytochrome c oxidase (complex IV, CIV), that cooperate to transfer electrons derived from NADH and succinate to molecular oxygen, creating an electrochemical gradient over the inner membrane that drives transmembrane transport and the ATP synthase. Cytochrome c oxidase is the component of the respiratory chain that catalyzes the reduction of oxygen to water. Electrons originating from reduced cytochrome c in the intermembrane space (IMS) are transferred via the dinuclear copper A center (CU(A)) of subunit 2 and heme A of subunit 1 to the active site in subunit 1, a binuclear center (BNC) formed by heme A3 and copper B (CU(B)). The BNC reduces molecular oxygen to 2 water molecules using 4 electrons from cytochrome c in the IMS and 4 protons from the mitochondrial matrix.</text>
</comment>
<comment type="pathway">
    <text evidence="1">Energy metabolism; oxidative phosphorylation.</text>
</comment>
<comment type="subunit">
    <text evidence="1">Component of the cytochrome c oxidase (complex IV, CIV), a multisubunit enzyme composed of 14 subunits. The complex is composed of a catalytic core of 3 subunits MT-CO1, MT-CO2 and MT-CO3, encoded in the mitochondrial DNA, and 11 supernumerary subunits COX4I, COX5A, COX5B, COX6A, COX6B, COX6C, COX7A, COX7B, COX7C, COX8 and NDUFA4, which are encoded in the nuclear genome. The complex exists as a monomer or a dimer and forms supercomplexes (SCs) in the inner mitochondrial membrane with NADH-ubiquinone oxidoreductase (complex I, CI) and ubiquinol-cytochrome c oxidoreductase (cytochrome b-c1 complex, complex III, CIII), resulting in different assemblies (supercomplex SCI(1)III(2)IV(1) and megacomplex MCI(2)III(2)IV(2)).</text>
</comment>
<comment type="subcellular location">
    <subcellularLocation>
        <location evidence="1">Mitochondrion inner membrane</location>
        <topology evidence="1">Single-pass membrane protein</topology>
    </subcellularLocation>
</comment>
<comment type="similarity">
    <text evidence="2">Belongs to the cytochrome c oxidase VIII family.</text>
</comment>
<name>COX8C_MOUSE</name>
<evidence type="ECO:0000250" key="1">
    <source>
        <dbReference type="UniProtKB" id="P10175"/>
    </source>
</evidence>
<evidence type="ECO:0000305" key="2"/>
<protein>
    <recommendedName>
        <fullName>Cytochrome c oxidase subunit 8C, mitochondrial</fullName>
    </recommendedName>
    <alternativeName>
        <fullName>Cytochrome c oxidase polypeptide 8 isoform 3</fullName>
    </alternativeName>
    <alternativeName>
        <fullName>Cytochrome c oxidase polypeptide VIII isoform 3</fullName>
        <shortName>COX VIII-3</shortName>
    </alternativeName>
    <alternativeName>
        <fullName>Cytochrome c oxidase subunit 8-3</fullName>
    </alternativeName>
</protein>
<sequence>MSRLLLLCSSLLRHRAVLFSKPGHPGRLSHSESPQKKILSPTESAVGIVVFFTTFYIPAAYVLSSLKYFKGE</sequence>
<accession>A6H666</accession>
<organism>
    <name type="scientific">Mus musculus</name>
    <name type="common">Mouse</name>
    <dbReference type="NCBI Taxonomy" id="10090"/>
    <lineage>
        <taxon>Eukaryota</taxon>
        <taxon>Metazoa</taxon>
        <taxon>Chordata</taxon>
        <taxon>Craniata</taxon>
        <taxon>Vertebrata</taxon>
        <taxon>Euteleostomi</taxon>
        <taxon>Mammalia</taxon>
        <taxon>Eutheria</taxon>
        <taxon>Euarchontoglires</taxon>
        <taxon>Glires</taxon>
        <taxon>Rodentia</taxon>
        <taxon>Myomorpha</taxon>
        <taxon>Muroidea</taxon>
        <taxon>Muridae</taxon>
        <taxon>Murinae</taxon>
        <taxon>Mus</taxon>
        <taxon>Mus</taxon>
    </lineage>
</organism>
<reference key="1">
    <citation type="journal article" date="2004" name="Genome Res.">
        <title>The status, quality, and expansion of the NIH full-length cDNA project: the Mammalian Gene Collection (MGC).</title>
        <authorList>
            <consortium name="The MGC Project Team"/>
        </authorList>
    </citation>
    <scope>NUCLEOTIDE SEQUENCE [LARGE SCALE MRNA]</scope>
    <source>
        <tissue>Testis</tissue>
    </source>
</reference>
<gene>
    <name type="primary">Cox8c</name>
</gene>
<dbReference type="EMBL" id="BC145768">
    <property type="protein sequence ID" value="AAI45769.1"/>
    <property type="molecule type" value="mRNA"/>
</dbReference>
<dbReference type="EMBL" id="BC145770">
    <property type="protein sequence ID" value="AAI45771.1"/>
    <property type="molecule type" value="mRNA"/>
</dbReference>
<dbReference type="CCDS" id="CCDS56857.1"/>
<dbReference type="RefSeq" id="NP_001034138.1">
    <property type="nucleotide sequence ID" value="NM_001039049.1"/>
</dbReference>
<dbReference type="SMR" id="A6H666"/>
<dbReference type="FunCoup" id="A6H666">
    <property type="interactions" value="129"/>
</dbReference>
<dbReference type="STRING" id="10090.ENSMUSP00000056155"/>
<dbReference type="PaxDb" id="10090-ENSMUSP00000056155"/>
<dbReference type="Ensembl" id="ENSMUST00000053611.5">
    <property type="protein sequence ID" value="ENSMUSP00000056155.4"/>
    <property type="gene ID" value="ENSMUSG00000043319.6"/>
</dbReference>
<dbReference type="GeneID" id="75483"/>
<dbReference type="KEGG" id="mmu:75483"/>
<dbReference type="UCSC" id="uc007ouv.1">
    <property type="organism name" value="mouse"/>
</dbReference>
<dbReference type="AGR" id="MGI:1922733"/>
<dbReference type="CTD" id="341947"/>
<dbReference type="MGI" id="MGI:1922733">
    <property type="gene designation" value="Cox8c"/>
</dbReference>
<dbReference type="VEuPathDB" id="HostDB:ENSMUSG00000043319"/>
<dbReference type="eggNOG" id="ENOG502TKKT">
    <property type="taxonomic scope" value="Eukaryota"/>
</dbReference>
<dbReference type="GeneTree" id="ENSGT00970000193543"/>
<dbReference type="HOGENOM" id="CLU_202012_0_0_1"/>
<dbReference type="InParanoid" id="A6H666"/>
<dbReference type="OrthoDB" id="9623219at2759"/>
<dbReference type="PhylomeDB" id="A6H666"/>
<dbReference type="Reactome" id="R-MMU-5628897">
    <property type="pathway name" value="TP53 Regulates Metabolic Genes"/>
</dbReference>
<dbReference type="Reactome" id="R-MMU-611105">
    <property type="pathway name" value="Respiratory electron transport"/>
</dbReference>
<dbReference type="Reactome" id="R-MMU-9707564">
    <property type="pathway name" value="Cytoprotection by HMOX1"/>
</dbReference>
<dbReference type="Reactome" id="R-MMU-9864848">
    <property type="pathway name" value="Complex IV assembly"/>
</dbReference>
<dbReference type="UniPathway" id="UPA00705"/>
<dbReference type="BioGRID-ORCS" id="75483">
    <property type="hits" value="1 hit in 77 CRISPR screens"/>
</dbReference>
<dbReference type="PRO" id="PR:A6H666"/>
<dbReference type="Proteomes" id="UP000000589">
    <property type="component" value="Chromosome 12"/>
</dbReference>
<dbReference type="RNAct" id="A6H666">
    <property type="molecule type" value="protein"/>
</dbReference>
<dbReference type="Bgee" id="ENSMUSG00000043319">
    <property type="expression patterns" value="Expressed in seminiferous tubule of testis and 37 other cell types or tissues"/>
</dbReference>
<dbReference type="GO" id="GO:0005743">
    <property type="term" value="C:mitochondrial inner membrane"/>
    <property type="evidence" value="ECO:0007669"/>
    <property type="project" value="UniProtKB-SubCell"/>
</dbReference>
<dbReference type="GO" id="GO:0005739">
    <property type="term" value="C:mitochondrion"/>
    <property type="evidence" value="ECO:0007005"/>
    <property type="project" value="MGI"/>
</dbReference>
<dbReference type="GO" id="GO:0045277">
    <property type="term" value="C:respiratory chain complex IV"/>
    <property type="evidence" value="ECO:0007669"/>
    <property type="project" value="InterPro"/>
</dbReference>
<dbReference type="GO" id="GO:0006123">
    <property type="term" value="P:mitochondrial electron transport, cytochrome c to oxygen"/>
    <property type="evidence" value="ECO:0007669"/>
    <property type="project" value="InterPro"/>
</dbReference>
<dbReference type="FunFam" id="4.10.81.10:FF:000002">
    <property type="entry name" value="cytochrome c oxidase subunit 8C, mitochondrial"/>
    <property type="match status" value="1"/>
</dbReference>
<dbReference type="Gene3D" id="4.10.81.10">
    <property type="entry name" value="Cytochrome c oxidase, subunit 8"/>
    <property type="match status" value="1"/>
</dbReference>
<dbReference type="InterPro" id="IPR003205">
    <property type="entry name" value="Cyt_c_oxidase_su8"/>
</dbReference>
<dbReference type="InterPro" id="IPR036548">
    <property type="entry name" value="Cyt_c_oxidase_su8_sf"/>
</dbReference>
<dbReference type="PANTHER" id="PTHR16717">
    <property type="entry name" value="CYTOCHROME C OXIDASE POLYPEPTIDE VIII"/>
    <property type="match status" value="1"/>
</dbReference>
<dbReference type="PANTHER" id="PTHR16717:SF2">
    <property type="entry name" value="CYTOCHROME C OXIDASE SUBUNIT 8C, MITOCHONDRIAL"/>
    <property type="match status" value="1"/>
</dbReference>
<dbReference type="Pfam" id="PF02285">
    <property type="entry name" value="COX8"/>
    <property type="match status" value="1"/>
</dbReference>
<dbReference type="SUPFAM" id="SSF81431">
    <property type="entry name" value="Mitochondrial cytochrome c oxidase subunit VIIIb (aka IX)"/>
    <property type="match status" value="1"/>
</dbReference>
<feature type="transit peptide" description="Mitochondrion" evidence="1">
    <location>
        <begin position="1"/>
        <end position="29"/>
    </location>
</feature>
<feature type="chain" id="PRO_0000370690" description="Cytochrome c oxidase subunit 8C, mitochondrial">
    <location>
        <begin position="30"/>
        <end position="72"/>
    </location>
</feature>
<feature type="topological domain" description="Mitochondrial matrix" evidence="1">
    <location>
        <begin position="30"/>
        <end position="40"/>
    </location>
</feature>
<feature type="transmembrane region" description="Helical" evidence="1">
    <location>
        <begin position="41"/>
        <end position="64"/>
    </location>
</feature>
<feature type="topological domain" description="Mitochondrial intermembrane" evidence="1">
    <location>
        <begin position="65"/>
        <end position="72"/>
    </location>
</feature>
<proteinExistence type="inferred from homology"/>
<keyword id="KW-0472">Membrane</keyword>
<keyword id="KW-0496">Mitochondrion</keyword>
<keyword id="KW-0999">Mitochondrion inner membrane</keyword>
<keyword id="KW-1185">Reference proteome</keyword>
<keyword id="KW-0809">Transit peptide</keyword>
<keyword id="KW-0812">Transmembrane</keyword>
<keyword id="KW-1133">Transmembrane helix</keyword>